<organism>
    <name type="scientific">Gerbera jamesonii</name>
    <name type="common">Transvaal daisy</name>
    <dbReference type="NCBI Taxonomy" id="13547"/>
    <lineage>
        <taxon>Eukaryota</taxon>
        <taxon>Viridiplantae</taxon>
        <taxon>Streptophyta</taxon>
        <taxon>Embryophyta</taxon>
        <taxon>Tracheophyta</taxon>
        <taxon>Spermatophyta</taxon>
        <taxon>Magnoliopsida</taxon>
        <taxon>eudicotyledons</taxon>
        <taxon>Gunneridae</taxon>
        <taxon>Pentapetalae</taxon>
        <taxon>asterids</taxon>
        <taxon>campanulids</taxon>
        <taxon>Asterales</taxon>
        <taxon>Asteraceae</taxon>
        <taxon>Mutisioideae</taxon>
        <taxon>Mutisieae</taxon>
        <taxon>Gerbera</taxon>
    </lineage>
</organism>
<keyword id="KW-0150">Chloroplast</keyword>
<keyword id="KW-0472">Membrane</keyword>
<keyword id="KW-0520">NAD</keyword>
<keyword id="KW-0521">NADP</keyword>
<keyword id="KW-0934">Plastid</keyword>
<keyword id="KW-0618">Plastoquinone</keyword>
<keyword id="KW-0874">Quinone</keyword>
<keyword id="KW-0793">Thylakoid</keyword>
<keyword id="KW-1278">Translocase</keyword>
<keyword id="KW-0812">Transmembrane</keyword>
<keyword id="KW-1133">Transmembrane helix</keyword>
<keyword id="KW-0813">Transport</keyword>
<geneLocation type="chloroplast"/>
<comment type="function">
    <text evidence="1">NDH shuttles electrons from NAD(P)H:plastoquinone, via FMN and iron-sulfur (Fe-S) centers, to quinones in the photosynthetic chain and possibly in a chloroplast respiratory chain. The immediate electron acceptor for the enzyme in this species is believed to be plastoquinone. Couples the redox reaction to proton translocation, and thus conserves the redox energy in a proton gradient (By similarity).</text>
</comment>
<comment type="catalytic activity">
    <reaction>
        <text>a plastoquinone + NADH + (n+1) H(+)(in) = a plastoquinol + NAD(+) + n H(+)(out)</text>
        <dbReference type="Rhea" id="RHEA:42608"/>
        <dbReference type="Rhea" id="RHEA-COMP:9561"/>
        <dbReference type="Rhea" id="RHEA-COMP:9562"/>
        <dbReference type="ChEBI" id="CHEBI:15378"/>
        <dbReference type="ChEBI" id="CHEBI:17757"/>
        <dbReference type="ChEBI" id="CHEBI:57540"/>
        <dbReference type="ChEBI" id="CHEBI:57945"/>
        <dbReference type="ChEBI" id="CHEBI:62192"/>
    </reaction>
</comment>
<comment type="catalytic activity">
    <reaction>
        <text>a plastoquinone + NADPH + (n+1) H(+)(in) = a plastoquinol + NADP(+) + n H(+)(out)</text>
        <dbReference type="Rhea" id="RHEA:42612"/>
        <dbReference type="Rhea" id="RHEA-COMP:9561"/>
        <dbReference type="Rhea" id="RHEA-COMP:9562"/>
        <dbReference type="ChEBI" id="CHEBI:15378"/>
        <dbReference type="ChEBI" id="CHEBI:17757"/>
        <dbReference type="ChEBI" id="CHEBI:57783"/>
        <dbReference type="ChEBI" id="CHEBI:58349"/>
        <dbReference type="ChEBI" id="CHEBI:62192"/>
    </reaction>
</comment>
<comment type="subunit">
    <text evidence="1">NDH is composed of at least 16 different subunits, 5 of which are encoded in the nucleus.</text>
</comment>
<comment type="subcellular location">
    <subcellularLocation>
        <location evidence="1">Plastid</location>
        <location evidence="1">Chloroplast thylakoid membrane</location>
        <topology evidence="1">Multi-pass membrane protein</topology>
    </subcellularLocation>
</comment>
<comment type="similarity">
    <text evidence="3">Belongs to the complex I subunit 5 family.</text>
</comment>
<feature type="chain" id="PRO_0000118184" description="NAD(P)H-quinone oxidoreductase subunit 5, chloroplastic">
    <location>
        <begin position="1"/>
        <end position="744"/>
    </location>
</feature>
<feature type="transmembrane region" description="Helical" evidence="2">
    <location>
        <begin position="9"/>
        <end position="29"/>
    </location>
</feature>
<feature type="transmembrane region" description="Helical" evidence="2">
    <location>
        <begin position="40"/>
        <end position="60"/>
    </location>
</feature>
<feature type="transmembrane region" description="Helical" evidence="2">
    <location>
        <begin position="89"/>
        <end position="109"/>
    </location>
</feature>
<feature type="transmembrane region" description="Helical" evidence="2">
    <location>
        <begin position="125"/>
        <end position="145"/>
    </location>
</feature>
<feature type="transmembrane region" description="Helical" evidence="2">
    <location>
        <begin position="147"/>
        <end position="167"/>
    </location>
</feature>
<feature type="transmembrane region" description="Helical" evidence="2">
    <location>
        <begin position="185"/>
        <end position="205"/>
    </location>
</feature>
<feature type="transmembrane region" description="Helical" evidence="2">
    <location>
        <begin position="219"/>
        <end position="239"/>
    </location>
</feature>
<feature type="transmembrane region" description="Helical" evidence="2">
    <location>
        <begin position="258"/>
        <end position="278"/>
    </location>
</feature>
<feature type="transmembrane region" description="Helical" evidence="2">
    <location>
        <begin position="290"/>
        <end position="312"/>
    </location>
</feature>
<feature type="transmembrane region" description="Helical" evidence="2">
    <location>
        <begin position="327"/>
        <end position="347"/>
    </location>
</feature>
<feature type="transmembrane region" description="Helical" evidence="2">
    <location>
        <begin position="354"/>
        <end position="374"/>
    </location>
</feature>
<feature type="transmembrane region" description="Helical" evidence="2">
    <location>
        <begin position="396"/>
        <end position="416"/>
    </location>
</feature>
<feature type="transmembrane region" description="Helical" evidence="2">
    <location>
        <begin position="425"/>
        <end position="445"/>
    </location>
</feature>
<feature type="transmembrane region" description="Helical" evidence="2">
    <location>
        <begin position="549"/>
        <end position="569"/>
    </location>
</feature>
<feature type="transmembrane region" description="Helical" evidence="2">
    <location>
        <begin position="608"/>
        <end position="628"/>
    </location>
</feature>
<feature type="transmembrane region" description="Helical" evidence="2">
    <location>
        <begin position="724"/>
        <end position="744"/>
    </location>
</feature>
<gene>
    <name type="primary">ndhF</name>
</gene>
<proteinExistence type="inferred from homology"/>
<dbReference type="EC" id="7.1.1.-"/>
<dbReference type="EMBL" id="L39403">
    <property type="protein sequence ID" value="AAC37453.1"/>
    <property type="molecule type" value="Genomic_DNA"/>
</dbReference>
<dbReference type="SMR" id="P51100"/>
<dbReference type="GO" id="GO:0009535">
    <property type="term" value="C:chloroplast thylakoid membrane"/>
    <property type="evidence" value="ECO:0007669"/>
    <property type="project" value="UniProtKB-SubCell"/>
</dbReference>
<dbReference type="GO" id="GO:0008137">
    <property type="term" value="F:NADH dehydrogenase (ubiquinone) activity"/>
    <property type="evidence" value="ECO:0007669"/>
    <property type="project" value="InterPro"/>
</dbReference>
<dbReference type="GO" id="GO:0048038">
    <property type="term" value="F:quinone binding"/>
    <property type="evidence" value="ECO:0007669"/>
    <property type="project" value="UniProtKB-KW"/>
</dbReference>
<dbReference type="GO" id="GO:0042773">
    <property type="term" value="P:ATP synthesis coupled electron transport"/>
    <property type="evidence" value="ECO:0007669"/>
    <property type="project" value="InterPro"/>
</dbReference>
<dbReference type="GO" id="GO:0015990">
    <property type="term" value="P:electron transport coupled proton transport"/>
    <property type="evidence" value="ECO:0007669"/>
    <property type="project" value="TreeGrafter"/>
</dbReference>
<dbReference type="Gene3D" id="1.20.5.2700">
    <property type="match status" value="1"/>
</dbReference>
<dbReference type="InterPro" id="IPR002128">
    <property type="entry name" value="NADH_UbQ_OxRdtase_chlpt_su5_C"/>
</dbReference>
<dbReference type="InterPro" id="IPR018393">
    <property type="entry name" value="NADHpl_OxRdtase_5_subgr"/>
</dbReference>
<dbReference type="InterPro" id="IPR001750">
    <property type="entry name" value="ND/Mrp_TM"/>
</dbReference>
<dbReference type="InterPro" id="IPR003945">
    <property type="entry name" value="NU5C-like"/>
</dbReference>
<dbReference type="InterPro" id="IPR001516">
    <property type="entry name" value="Proton_antipo_N"/>
</dbReference>
<dbReference type="NCBIfam" id="TIGR01974">
    <property type="entry name" value="NDH_I_L"/>
    <property type="match status" value="1"/>
</dbReference>
<dbReference type="NCBIfam" id="NF005141">
    <property type="entry name" value="PRK06590.1"/>
    <property type="match status" value="1"/>
</dbReference>
<dbReference type="PANTHER" id="PTHR42829">
    <property type="entry name" value="NADH-UBIQUINONE OXIDOREDUCTASE CHAIN 5"/>
    <property type="match status" value="1"/>
</dbReference>
<dbReference type="PANTHER" id="PTHR42829:SF2">
    <property type="entry name" value="NADH-UBIQUINONE OXIDOREDUCTASE CHAIN 5"/>
    <property type="match status" value="1"/>
</dbReference>
<dbReference type="Pfam" id="PF01010">
    <property type="entry name" value="Proton_antipo_C"/>
    <property type="match status" value="1"/>
</dbReference>
<dbReference type="Pfam" id="PF00361">
    <property type="entry name" value="Proton_antipo_M"/>
    <property type="match status" value="1"/>
</dbReference>
<dbReference type="Pfam" id="PF00662">
    <property type="entry name" value="Proton_antipo_N"/>
    <property type="match status" value="1"/>
</dbReference>
<dbReference type="PRINTS" id="PR01434">
    <property type="entry name" value="NADHDHGNASE5"/>
</dbReference>
<dbReference type="PRINTS" id="PR01435">
    <property type="entry name" value="NPOXDRDTASE5"/>
</dbReference>
<reference key="1">
    <citation type="journal article" date="1995" name="Proc. Natl. Acad. Sci. U.S.A.">
        <title>ndhF sequence evolution and the major clades in the sunflower family.</title>
        <authorList>
            <person name="Kim K.-J."/>
            <person name="Jansen R.K."/>
        </authorList>
    </citation>
    <scope>NUCLEOTIDE SEQUENCE [GENOMIC DNA]</scope>
</reference>
<protein>
    <recommendedName>
        <fullName>NAD(P)H-quinone oxidoreductase subunit 5, chloroplastic</fullName>
        <ecNumber>7.1.1.-</ecNumber>
    </recommendedName>
    <alternativeName>
        <fullName>NAD(P)H dehydrogenase subunit 5</fullName>
    </alternativeName>
    <alternativeName>
        <fullName>NADH-plastoquinone oxidoreductase subunit 5</fullName>
    </alternativeName>
</protein>
<evidence type="ECO:0000250" key="1"/>
<evidence type="ECO:0000255" key="2"/>
<evidence type="ECO:0000305" key="3"/>
<sequence>MEQTYQYAWIIPFLPLPVPMLIGLGLLFFPTATKSLRRMWAFQSVLLLSIVMIFSINLSIQQINSSSVYQYVWSWIINNDFSLELGYLIDPLTSIMSILITTVGIMVLIYSDNYMSHDHGYLRFFAYMSFFSTSMLGLVTSSNLIQIYIFWELVGIRSYLLIGFWFTRPVAAKACQKAFVTNRVGDFGLLLGILGFYWITGSFEFRNLFQIFNNLISNNEVNFLFVTLCAVLLFAGAIAKSAQFPLHVWLPDAMEGPTPISALIHAATMVAAGIFLVARLLPLFIVIPHIMNFISLIGIITVFLGATLALAQKDIKRGLAYSTMSQLGYMMLALGMGSYRSALFHLITHAYSKALLFLGSGSVIHSMETLVGYCPKKSQNMVLMGGLTKHVPITKTSFFLGTLSLCGIPPLACFWSKDEILNDSWLYSPIFAIIAWSTAGLTAFYMCRMYLLTFEGHLNVHFQNYSGKKNTPFYSISVWGKEGSKISKKNFSLVTLLKMKTNGRASFFSNKVYKIDENVRSLIQPFLSISYFVNTKTYSYPYESDNTMLFPILILVLFTLFVGFLGIPFNQDGVDLDILSKWLTPSINLLHKNSNNSIDWYEFCKDAVFSVSISSFGIFIAFFLYKPVYSSFQNLDLINSFVKIGPKRIFFDKIKNGIYDWSYNRGYIDAFYGTFLTVGMRKLAEFAHFFDRRIIDGIPNGVGLMSFFVAEVIKSVGGGRISSYLFFYFSYLSFFLLIYYFFHF</sequence>
<name>NU5C_GERJA</name>
<accession>P51100</accession>